<protein>
    <recommendedName>
        <fullName evidence="1">UPF0229 protein YeaH</fullName>
    </recommendedName>
</protein>
<reference key="1">
    <citation type="journal article" date="2009" name="PLoS Genet.">
        <title>Organised genome dynamics in the Escherichia coli species results in highly diverse adaptive paths.</title>
        <authorList>
            <person name="Touchon M."/>
            <person name="Hoede C."/>
            <person name="Tenaillon O."/>
            <person name="Barbe V."/>
            <person name="Baeriswyl S."/>
            <person name="Bidet P."/>
            <person name="Bingen E."/>
            <person name="Bonacorsi S."/>
            <person name="Bouchier C."/>
            <person name="Bouvet O."/>
            <person name="Calteau A."/>
            <person name="Chiapello H."/>
            <person name="Clermont O."/>
            <person name="Cruveiller S."/>
            <person name="Danchin A."/>
            <person name="Diard M."/>
            <person name="Dossat C."/>
            <person name="Karoui M.E."/>
            <person name="Frapy E."/>
            <person name="Garry L."/>
            <person name="Ghigo J.M."/>
            <person name="Gilles A.M."/>
            <person name="Johnson J."/>
            <person name="Le Bouguenec C."/>
            <person name="Lescat M."/>
            <person name="Mangenot S."/>
            <person name="Martinez-Jehanne V."/>
            <person name="Matic I."/>
            <person name="Nassif X."/>
            <person name="Oztas S."/>
            <person name="Petit M.A."/>
            <person name="Pichon C."/>
            <person name="Rouy Z."/>
            <person name="Ruf C.S."/>
            <person name="Schneider D."/>
            <person name="Tourret J."/>
            <person name="Vacherie B."/>
            <person name="Vallenet D."/>
            <person name="Medigue C."/>
            <person name="Rocha E.P.C."/>
            <person name="Denamur E."/>
        </authorList>
    </citation>
    <scope>NUCLEOTIDE SEQUENCE [LARGE SCALE GENOMIC DNA]</scope>
    <source>
        <strain>S88 / ExPEC</strain>
    </source>
</reference>
<organism>
    <name type="scientific">Escherichia coli O45:K1 (strain S88 / ExPEC)</name>
    <dbReference type="NCBI Taxonomy" id="585035"/>
    <lineage>
        <taxon>Bacteria</taxon>
        <taxon>Pseudomonadati</taxon>
        <taxon>Pseudomonadota</taxon>
        <taxon>Gammaproteobacteria</taxon>
        <taxon>Enterobacterales</taxon>
        <taxon>Enterobacteriaceae</taxon>
        <taxon>Escherichia</taxon>
    </lineage>
</organism>
<keyword id="KW-1185">Reference proteome</keyword>
<gene>
    <name evidence="1" type="primary">yeaH</name>
    <name type="ordered locus">ECS88_1837</name>
</gene>
<feature type="chain" id="PRO_1000139639" description="UPF0229 protein YeaH">
    <location>
        <begin position="1"/>
        <end position="427"/>
    </location>
</feature>
<feature type="region of interest" description="Disordered" evidence="2">
    <location>
        <begin position="79"/>
        <end position="110"/>
    </location>
</feature>
<feature type="compositionally biased region" description="Basic and acidic residues" evidence="2">
    <location>
        <begin position="79"/>
        <end position="90"/>
    </location>
</feature>
<feature type="compositionally biased region" description="Gly residues" evidence="2">
    <location>
        <begin position="92"/>
        <end position="102"/>
    </location>
</feature>
<sequence length="427" mass="49450">MTWFIDRRLNGKNKSMVNRQRFLRRYKAQIKQSISEAINKRSVTDVDSGESVSIPTEDISEPMFHQGRGGLRHRVHPGNDHFVQNDRIERPQGGGGGSGSGQGQASQDGEGQDEFVFQISKDEYLDLLFEDLALPNLKQNQQRQLTEYKTHRAGYTANGVPANISVVRSLQNSLARRTAMTAGKRRELHALEENLAIISNSEPAQLLEEERLRKEIAELRAKIERVPFIDTFDLRYKNYEKRPDPSSQAVMFCLMDVSGSMDQSTKDMAKRFYILLYLFLSRTYKNVEVVYIRHHTQAKEVDEHEFFYSQETGGTIVSSALKLMDEVVKERYNPAQWNIYAAQASDGDNWADDSPLCHEILAKKILPVVRYYSYIEITRRAHQTLWREYEHLQSTFDNFAMQHIRDQDDIYPVFRELFHKQNATAKD</sequence>
<comment type="similarity">
    <text evidence="1">Belongs to the UPF0229 family.</text>
</comment>
<accession>B7MBJ2</accession>
<evidence type="ECO:0000255" key="1">
    <source>
        <dbReference type="HAMAP-Rule" id="MF_01232"/>
    </source>
</evidence>
<evidence type="ECO:0000256" key="2">
    <source>
        <dbReference type="SAM" id="MobiDB-lite"/>
    </source>
</evidence>
<dbReference type="EMBL" id="CU928161">
    <property type="protein sequence ID" value="CAR03144.1"/>
    <property type="molecule type" value="Genomic_DNA"/>
</dbReference>
<dbReference type="RefSeq" id="WP_000219684.1">
    <property type="nucleotide sequence ID" value="NC_011742.1"/>
</dbReference>
<dbReference type="SMR" id="B7MBJ2"/>
<dbReference type="KEGG" id="ecz:ECS88_1837"/>
<dbReference type="HOGENOM" id="CLU_049702_0_0_6"/>
<dbReference type="Proteomes" id="UP000000747">
    <property type="component" value="Chromosome"/>
</dbReference>
<dbReference type="HAMAP" id="MF_01232">
    <property type="entry name" value="UPF0229"/>
    <property type="match status" value="1"/>
</dbReference>
<dbReference type="InterPro" id="IPR006698">
    <property type="entry name" value="UPF0229"/>
</dbReference>
<dbReference type="NCBIfam" id="NF003707">
    <property type="entry name" value="PRK05325.1-2"/>
    <property type="match status" value="1"/>
</dbReference>
<dbReference type="NCBIfam" id="NF003708">
    <property type="entry name" value="PRK05325.1-3"/>
    <property type="match status" value="1"/>
</dbReference>
<dbReference type="PANTHER" id="PTHR30510">
    <property type="entry name" value="UPF0229 PROTEIN YEAH"/>
    <property type="match status" value="1"/>
</dbReference>
<dbReference type="PANTHER" id="PTHR30510:SF2">
    <property type="entry name" value="UPF0229 PROTEIN YEAH"/>
    <property type="match status" value="1"/>
</dbReference>
<dbReference type="Pfam" id="PF04285">
    <property type="entry name" value="DUF444"/>
    <property type="match status" value="1"/>
</dbReference>
<name>YEAH_ECO45</name>
<proteinExistence type="inferred from homology"/>